<protein>
    <recommendedName>
        <fullName evidence="1">UDP-N-acetylglucosamine--N-acetylmuramyl-(pentapeptide) pyrophosphoryl-undecaprenol N-acetylglucosamine transferase</fullName>
        <ecNumber evidence="1">2.4.1.227</ecNumber>
    </recommendedName>
    <alternativeName>
        <fullName evidence="1">Undecaprenyl-PP-MurNAc-pentapeptide-UDPGlcNAc GlcNAc transferase</fullName>
    </alternativeName>
</protein>
<dbReference type="EC" id="2.4.1.227" evidence="1"/>
<dbReference type="EMBL" id="BA000030">
    <property type="protein sequence ID" value="BAC73833.1"/>
    <property type="molecule type" value="Genomic_DNA"/>
</dbReference>
<dbReference type="RefSeq" id="WP_010987523.1">
    <property type="nucleotide sequence ID" value="NZ_JZJK01000089.1"/>
</dbReference>
<dbReference type="SMR" id="Q820F6"/>
<dbReference type="CAZy" id="GT28">
    <property type="family name" value="Glycosyltransferase Family 28"/>
</dbReference>
<dbReference type="GeneID" id="41543199"/>
<dbReference type="KEGG" id="sma:SAVERM_6122"/>
<dbReference type="eggNOG" id="COG0707">
    <property type="taxonomic scope" value="Bacteria"/>
</dbReference>
<dbReference type="HOGENOM" id="CLU_037404_1_0_11"/>
<dbReference type="OrthoDB" id="9808936at2"/>
<dbReference type="UniPathway" id="UPA00219"/>
<dbReference type="Proteomes" id="UP000000428">
    <property type="component" value="Chromosome"/>
</dbReference>
<dbReference type="GO" id="GO:0005886">
    <property type="term" value="C:plasma membrane"/>
    <property type="evidence" value="ECO:0007669"/>
    <property type="project" value="UniProtKB-SubCell"/>
</dbReference>
<dbReference type="GO" id="GO:0051991">
    <property type="term" value="F:UDP-N-acetyl-D-glucosamine:N-acetylmuramoyl-L-alanyl-D-glutamyl-meso-2,6-diaminopimelyl-D-alanyl-D-alanine-diphosphoundecaprenol 4-beta-N-acetylglucosaminlytransferase activity"/>
    <property type="evidence" value="ECO:0007669"/>
    <property type="project" value="RHEA"/>
</dbReference>
<dbReference type="GO" id="GO:0050511">
    <property type="term" value="F:undecaprenyldiphospho-muramoylpentapeptide beta-N-acetylglucosaminyltransferase activity"/>
    <property type="evidence" value="ECO:0007669"/>
    <property type="project" value="UniProtKB-UniRule"/>
</dbReference>
<dbReference type="GO" id="GO:0005975">
    <property type="term" value="P:carbohydrate metabolic process"/>
    <property type="evidence" value="ECO:0007669"/>
    <property type="project" value="InterPro"/>
</dbReference>
<dbReference type="GO" id="GO:0051301">
    <property type="term" value="P:cell division"/>
    <property type="evidence" value="ECO:0007669"/>
    <property type="project" value="UniProtKB-KW"/>
</dbReference>
<dbReference type="GO" id="GO:0071555">
    <property type="term" value="P:cell wall organization"/>
    <property type="evidence" value="ECO:0007669"/>
    <property type="project" value="UniProtKB-KW"/>
</dbReference>
<dbReference type="GO" id="GO:0030259">
    <property type="term" value="P:lipid glycosylation"/>
    <property type="evidence" value="ECO:0007669"/>
    <property type="project" value="UniProtKB-UniRule"/>
</dbReference>
<dbReference type="GO" id="GO:0009252">
    <property type="term" value="P:peptidoglycan biosynthetic process"/>
    <property type="evidence" value="ECO:0007669"/>
    <property type="project" value="UniProtKB-UniRule"/>
</dbReference>
<dbReference type="GO" id="GO:0008360">
    <property type="term" value="P:regulation of cell shape"/>
    <property type="evidence" value="ECO:0007669"/>
    <property type="project" value="UniProtKB-KW"/>
</dbReference>
<dbReference type="CDD" id="cd03785">
    <property type="entry name" value="GT28_MurG"/>
    <property type="match status" value="1"/>
</dbReference>
<dbReference type="Gene3D" id="3.40.50.2000">
    <property type="entry name" value="Glycogen Phosphorylase B"/>
    <property type="match status" value="2"/>
</dbReference>
<dbReference type="HAMAP" id="MF_00033">
    <property type="entry name" value="MurG"/>
    <property type="match status" value="1"/>
</dbReference>
<dbReference type="InterPro" id="IPR006009">
    <property type="entry name" value="GlcNAc_MurG"/>
</dbReference>
<dbReference type="InterPro" id="IPR007235">
    <property type="entry name" value="Glyco_trans_28_C"/>
</dbReference>
<dbReference type="InterPro" id="IPR004276">
    <property type="entry name" value="GlycoTrans_28_N"/>
</dbReference>
<dbReference type="NCBIfam" id="TIGR01133">
    <property type="entry name" value="murG"/>
    <property type="match status" value="1"/>
</dbReference>
<dbReference type="PANTHER" id="PTHR21015:SF22">
    <property type="entry name" value="GLYCOSYLTRANSFERASE"/>
    <property type="match status" value="1"/>
</dbReference>
<dbReference type="PANTHER" id="PTHR21015">
    <property type="entry name" value="UDP-N-ACETYLGLUCOSAMINE--N-ACETYLMURAMYL-(PENTAPEPTIDE) PYROPHOSPHORYL-UNDECAPRENOL N-ACETYLGLUCOSAMINE TRANSFERASE 1"/>
    <property type="match status" value="1"/>
</dbReference>
<dbReference type="Pfam" id="PF04101">
    <property type="entry name" value="Glyco_tran_28_C"/>
    <property type="match status" value="1"/>
</dbReference>
<dbReference type="Pfam" id="PF03033">
    <property type="entry name" value="Glyco_transf_28"/>
    <property type="match status" value="1"/>
</dbReference>
<dbReference type="SUPFAM" id="SSF53756">
    <property type="entry name" value="UDP-Glycosyltransferase/glycogen phosphorylase"/>
    <property type="match status" value="1"/>
</dbReference>
<accession>Q820F6</accession>
<reference key="1">
    <citation type="journal article" date="2001" name="Proc. Natl. Acad. Sci. U.S.A.">
        <title>Genome sequence of an industrial microorganism Streptomyces avermitilis: deducing the ability of producing secondary metabolites.</title>
        <authorList>
            <person name="Omura S."/>
            <person name="Ikeda H."/>
            <person name="Ishikawa J."/>
            <person name="Hanamoto A."/>
            <person name="Takahashi C."/>
            <person name="Shinose M."/>
            <person name="Takahashi Y."/>
            <person name="Horikawa H."/>
            <person name="Nakazawa H."/>
            <person name="Osonoe T."/>
            <person name="Kikuchi H."/>
            <person name="Shiba T."/>
            <person name="Sakaki Y."/>
            <person name="Hattori M."/>
        </authorList>
    </citation>
    <scope>NUCLEOTIDE SEQUENCE [LARGE SCALE GENOMIC DNA]</scope>
    <source>
        <strain>ATCC 31267 / DSM 46492 / JCM 5070 / NBRC 14893 / NCIMB 12804 / NRRL 8165 / MA-4680</strain>
    </source>
</reference>
<reference key="2">
    <citation type="journal article" date="2003" name="Nat. Biotechnol.">
        <title>Complete genome sequence and comparative analysis of the industrial microorganism Streptomyces avermitilis.</title>
        <authorList>
            <person name="Ikeda H."/>
            <person name="Ishikawa J."/>
            <person name="Hanamoto A."/>
            <person name="Shinose M."/>
            <person name="Kikuchi H."/>
            <person name="Shiba T."/>
            <person name="Sakaki Y."/>
            <person name="Hattori M."/>
            <person name="Omura S."/>
        </authorList>
    </citation>
    <scope>NUCLEOTIDE SEQUENCE [LARGE SCALE GENOMIC DNA]</scope>
    <source>
        <strain>ATCC 31267 / DSM 46492 / JCM 5070 / NBRC 14893 / NCIMB 12804 / NRRL 8165 / MA-4680</strain>
    </source>
</reference>
<organism>
    <name type="scientific">Streptomyces avermitilis (strain ATCC 31267 / DSM 46492 / JCM 5070 / NBRC 14893 / NCIMB 12804 / NRRL 8165 / MA-4680)</name>
    <dbReference type="NCBI Taxonomy" id="227882"/>
    <lineage>
        <taxon>Bacteria</taxon>
        <taxon>Bacillati</taxon>
        <taxon>Actinomycetota</taxon>
        <taxon>Actinomycetes</taxon>
        <taxon>Kitasatosporales</taxon>
        <taxon>Streptomycetaceae</taxon>
        <taxon>Streptomyces</taxon>
    </lineage>
</organism>
<proteinExistence type="inferred from homology"/>
<keyword id="KW-0131">Cell cycle</keyword>
<keyword id="KW-0132">Cell division</keyword>
<keyword id="KW-1003">Cell membrane</keyword>
<keyword id="KW-0133">Cell shape</keyword>
<keyword id="KW-0961">Cell wall biogenesis/degradation</keyword>
<keyword id="KW-0328">Glycosyltransferase</keyword>
<keyword id="KW-0472">Membrane</keyword>
<keyword id="KW-0573">Peptidoglycan synthesis</keyword>
<keyword id="KW-1185">Reference proteome</keyword>
<keyword id="KW-0808">Transferase</keyword>
<feature type="chain" id="PRO_0000109219" description="UDP-N-acetylglucosamine--N-acetylmuramyl-(pentapeptide) pyrophosphoryl-undecaprenol N-acetylglucosamine transferase">
    <location>
        <begin position="1"/>
        <end position="363"/>
    </location>
</feature>
<feature type="binding site" evidence="1">
    <location>
        <begin position="10"/>
        <end position="12"/>
    </location>
    <ligand>
        <name>UDP-N-acetyl-alpha-D-glucosamine</name>
        <dbReference type="ChEBI" id="CHEBI:57705"/>
    </ligand>
</feature>
<feature type="binding site" evidence="1">
    <location>
        <position position="124"/>
    </location>
    <ligand>
        <name>UDP-N-acetyl-alpha-D-glucosamine</name>
        <dbReference type="ChEBI" id="CHEBI:57705"/>
    </ligand>
</feature>
<feature type="binding site" evidence="1">
    <location>
        <position position="161"/>
    </location>
    <ligand>
        <name>UDP-N-acetyl-alpha-D-glucosamine</name>
        <dbReference type="ChEBI" id="CHEBI:57705"/>
    </ligand>
</feature>
<feature type="binding site" evidence="1">
    <location>
        <position position="195"/>
    </location>
    <ligand>
        <name>UDP-N-acetyl-alpha-D-glucosamine</name>
        <dbReference type="ChEBI" id="CHEBI:57705"/>
    </ligand>
</feature>
<feature type="binding site" evidence="1">
    <location>
        <position position="291"/>
    </location>
    <ligand>
        <name>UDP-N-acetyl-alpha-D-glucosamine</name>
        <dbReference type="ChEBI" id="CHEBI:57705"/>
    </ligand>
</feature>
<name>MURG_STRAW</name>
<comment type="function">
    <text evidence="1">Cell wall formation. Catalyzes the transfer of a GlcNAc subunit on undecaprenyl-pyrophosphoryl-MurNAc-pentapeptide (lipid intermediate I) to form undecaprenyl-pyrophosphoryl-MurNAc-(pentapeptide)GlcNAc (lipid intermediate II).</text>
</comment>
<comment type="catalytic activity">
    <reaction evidence="1">
        <text>di-trans,octa-cis-undecaprenyl diphospho-N-acetyl-alpha-D-muramoyl-L-alanyl-D-glutamyl-meso-2,6-diaminopimeloyl-D-alanyl-D-alanine + UDP-N-acetyl-alpha-D-glucosamine = di-trans,octa-cis-undecaprenyl diphospho-[N-acetyl-alpha-D-glucosaminyl-(1-&gt;4)]-N-acetyl-alpha-D-muramoyl-L-alanyl-D-glutamyl-meso-2,6-diaminopimeloyl-D-alanyl-D-alanine + UDP + H(+)</text>
        <dbReference type="Rhea" id="RHEA:31227"/>
        <dbReference type="ChEBI" id="CHEBI:15378"/>
        <dbReference type="ChEBI" id="CHEBI:57705"/>
        <dbReference type="ChEBI" id="CHEBI:58223"/>
        <dbReference type="ChEBI" id="CHEBI:61387"/>
        <dbReference type="ChEBI" id="CHEBI:61388"/>
        <dbReference type="EC" id="2.4.1.227"/>
    </reaction>
</comment>
<comment type="pathway">
    <text evidence="1">Cell wall biogenesis; peptidoglycan biosynthesis.</text>
</comment>
<comment type="subcellular location">
    <subcellularLocation>
        <location evidence="1">Cell membrane</location>
        <topology evidence="1">Peripheral membrane protein</topology>
        <orientation evidence="1">Cytoplasmic side</orientation>
    </subcellularLocation>
</comment>
<comment type="similarity">
    <text evidence="1">Belongs to the glycosyltransferase 28 family. MurG subfamily.</text>
</comment>
<sequence length="363" mass="38525">MHVVLAGGGTAGHIEPALALADALRRQDPTVGITALGTERGLETRLVPERGYDLALIPAVPLPRKPTPELITVPGRLRGTIKAAEQILERTKADAVVGFGGYVALPGYLAAKRLGVPIVIHEANARPGLANKIGSRYAAQVAVSTPDSKLRGARYIGIPLRRSIATLDRAAVRPEARAAFGLDPNLPTLLVSGGSQGARRLNEVVQQVAPYLQQAGIQILHAVGPKNEMPQVHQMPGMPPYIPVPYVDRMDLAYAAADMMLCRAGAMTVAELSAVGLPAAYVPLPIGNGEQRLNAQPVVKAGGGLLVDDAELTPEWVQGNVLPVLADPHRLYEMSRAASEFGRRDADDLLVGMVYEAIAARHR</sequence>
<gene>
    <name evidence="1" type="primary">murG</name>
    <name type="ordered locus">SAV_6122</name>
</gene>
<evidence type="ECO:0000255" key="1">
    <source>
        <dbReference type="HAMAP-Rule" id="MF_00033"/>
    </source>
</evidence>